<evidence type="ECO:0000255" key="1">
    <source>
        <dbReference type="HAMAP-Rule" id="MF_00530"/>
    </source>
</evidence>
<name>ATPE_MARSD</name>
<keyword id="KW-0066">ATP synthesis</keyword>
<keyword id="KW-0997">Cell inner membrane</keyword>
<keyword id="KW-1003">Cell membrane</keyword>
<keyword id="KW-0139">CF(1)</keyword>
<keyword id="KW-0375">Hydrogen ion transport</keyword>
<keyword id="KW-0406">Ion transport</keyword>
<keyword id="KW-0472">Membrane</keyword>
<keyword id="KW-1185">Reference proteome</keyword>
<keyword id="KW-0813">Transport</keyword>
<accession>C6BSP5</accession>
<gene>
    <name evidence="1" type="primary">atpC</name>
    <name type="ordered locus">Desal_3453</name>
</gene>
<protein>
    <recommendedName>
        <fullName evidence="1">ATP synthase epsilon chain</fullName>
    </recommendedName>
    <alternativeName>
        <fullName evidence="1">ATP synthase F1 sector epsilon subunit</fullName>
    </alternativeName>
    <alternativeName>
        <fullName evidence="1">F-ATPase epsilon subunit</fullName>
    </alternativeName>
</protein>
<sequence>MASKLLLEIVTPDRKVLSQEVDYVGAPGIEGEFGIMANHIPFLSALGVGNLYFKEGNRTHYIFVSGGFAEVGNNKVTILAEVAEKAVEIDIARAQKAQEKAKARLAKAQDRIESARAQAALQRALARLTCKDAAQKAGTTTH</sequence>
<organism>
    <name type="scientific">Maridesulfovibrio salexigens (strain ATCC 14822 / DSM 2638 / NCIMB 8403 / VKM B-1763)</name>
    <name type="common">Desulfovibrio salexigens</name>
    <dbReference type="NCBI Taxonomy" id="526222"/>
    <lineage>
        <taxon>Bacteria</taxon>
        <taxon>Pseudomonadati</taxon>
        <taxon>Thermodesulfobacteriota</taxon>
        <taxon>Desulfovibrionia</taxon>
        <taxon>Desulfovibrionales</taxon>
        <taxon>Desulfovibrionaceae</taxon>
        <taxon>Maridesulfovibrio</taxon>
    </lineage>
</organism>
<comment type="function">
    <text evidence="1">Produces ATP from ADP in the presence of a proton gradient across the membrane.</text>
</comment>
<comment type="subunit">
    <text evidence="1">F-type ATPases have 2 components, CF(1) - the catalytic core - and CF(0) - the membrane proton channel. CF(1) has five subunits: alpha(3), beta(3), gamma(1), delta(1), epsilon(1). CF(0) has three main subunits: a, b and c.</text>
</comment>
<comment type="subcellular location">
    <subcellularLocation>
        <location evidence="1">Cell inner membrane</location>
        <topology evidence="1">Peripheral membrane protein</topology>
    </subcellularLocation>
</comment>
<comment type="similarity">
    <text evidence="1">Belongs to the ATPase epsilon chain family.</text>
</comment>
<dbReference type="EMBL" id="CP001649">
    <property type="protein sequence ID" value="ACS81501.1"/>
    <property type="molecule type" value="Genomic_DNA"/>
</dbReference>
<dbReference type="RefSeq" id="WP_015853317.1">
    <property type="nucleotide sequence ID" value="NC_012881.1"/>
</dbReference>
<dbReference type="SMR" id="C6BSP5"/>
<dbReference type="STRING" id="526222.Desal_3453"/>
<dbReference type="KEGG" id="dsa:Desal_3453"/>
<dbReference type="eggNOG" id="COG0355">
    <property type="taxonomic scope" value="Bacteria"/>
</dbReference>
<dbReference type="HOGENOM" id="CLU_084338_1_3_7"/>
<dbReference type="OrthoDB" id="9799969at2"/>
<dbReference type="Proteomes" id="UP000002601">
    <property type="component" value="Chromosome"/>
</dbReference>
<dbReference type="GO" id="GO:0005886">
    <property type="term" value="C:plasma membrane"/>
    <property type="evidence" value="ECO:0007669"/>
    <property type="project" value="UniProtKB-SubCell"/>
</dbReference>
<dbReference type="GO" id="GO:0045259">
    <property type="term" value="C:proton-transporting ATP synthase complex"/>
    <property type="evidence" value="ECO:0007669"/>
    <property type="project" value="UniProtKB-KW"/>
</dbReference>
<dbReference type="GO" id="GO:0005524">
    <property type="term" value="F:ATP binding"/>
    <property type="evidence" value="ECO:0007669"/>
    <property type="project" value="UniProtKB-UniRule"/>
</dbReference>
<dbReference type="GO" id="GO:0046933">
    <property type="term" value="F:proton-transporting ATP synthase activity, rotational mechanism"/>
    <property type="evidence" value="ECO:0007669"/>
    <property type="project" value="UniProtKB-UniRule"/>
</dbReference>
<dbReference type="CDD" id="cd12152">
    <property type="entry name" value="F1-ATPase_delta"/>
    <property type="match status" value="1"/>
</dbReference>
<dbReference type="Gene3D" id="1.20.5.440">
    <property type="entry name" value="ATP synthase delta/epsilon subunit, C-terminal domain"/>
    <property type="match status" value="1"/>
</dbReference>
<dbReference type="Gene3D" id="2.60.15.10">
    <property type="entry name" value="F0F1 ATP synthase delta/epsilon subunit, N-terminal"/>
    <property type="match status" value="1"/>
</dbReference>
<dbReference type="HAMAP" id="MF_00530">
    <property type="entry name" value="ATP_synth_epsil_bac"/>
    <property type="match status" value="1"/>
</dbReference>
<dbReference type="InterPro" id="IPR036794">
    <property type="entry name" value="ATP_F1_dsu/esu_C_sf"/>
</dbReference>
<dbReference type="InterPro" id="IPR001469">
    <property type="entry name" value="ATP_synth_F1_dsu/esu"/>
</dbReference>
<dbReference type="InterPro" id="IPR020546">
    <property type="entry name" value="ATP_synth_F1_dsu/esu_N"/>
</dbReference>
<dbReference type="InterPro" id="IPR020547">
    <property type="entry name" value="ATP_synth_F1_esu_C"/>
</dbReference>
<dbReference type="InterPro" id="IPR036771">
    <property type="entry name" value="ATPsynth_dsu/esu_N"/>
</dbReference>
<dbReference type="NCBIfam" id="TIGR01216">
    <property type="entry name" value="ATP_synt_epsi"/>
    <property type="match status" value="1"/>
</dbReference>
<dbReference type="NCBIfam" id="NF009980">
    <property type="entry name" value="PRK13446.1"/>
    <property type="match status" value="1"/>
</dbReference>
<dbReference type="PANTHER" id="PTHR13822">
    <property type="entry name" value="ATP SYNTHASE DELTA/EPSILON CHAIN"/>
    <property type="match status" value="1"/>
</dbReference>
<dbReference type="PANTHER" id="PTHR13822:SF10">
    <property type="entry name" value="ATP SYNTHASE EPSILON CHAIN, CHLOROPLASTIC"/>
    <property type="match status" value="1"/>
</dbReference>
<dbReference type="Pfam" id="PF00401">
    <property type="entry name" value="ATP-synt_DE"/>
    <property type="match status" value="1"/>
</dbReference>
<dbReference type="Pfam" id="PF02823">
    <property type="entry name" value="ATP-synt_DE_N"/>
    <property type="match status" value="1"/>
</dbReference>
<dbReference type="SUPFAM" id="SSF46604">
    <property type="entry name" value="Epsilon subunit of F1F0-ATP synthase C-terminal domain"/>
    <property type="match status" value="1"/>
</dbReference>
<dbReference type="SUPFAM" id="SSF51344">
    <property type="entry name" value="Epsilon subunit of F1F0-ATP synthase N-terminal domain"/>
    <property type="match status" value="1"/>
</dbReference>
<proteinExistence type="inferred from homology"/>
<feature type="chain" id="PRO_1000211781" description="ATP synthase epsilon chain">
    <location>
        <begin position="1"/>
        <end position="142"/>
    </location>
</feature>
<reference key="1">
    <citation type="submission" date="2009-06" db="EMBL/GenBank/DDBJ databases">
        <title>Complete sequence of Desulfovibrio salexigens DSM 2638.</title>
        <authorList>
            <consortium name="US DOE Joint Genome Institute"/>
            <person name="Lucas S."/>
            <person name="Copeland A."/>
            <person name="Lapidus A."/>
            <person name="Glavina del Rio T."/>
            <person name="Tice H."/>
            <person name="Bruce D."/>
            <person name="Goodwin L."/>
            <person name="Pitluck S."/>
            <person name="Munk A.C."/>
            <person name="Brettin T."/>
            <person name="Detter J.C."/>
            <person name="Han C."/>
            <person name="Tapia R."/>
            <person name="Larimer F."/>
            <person name="Land M."/>
            <person name="Hauser L."/>
            <person name="Kyrpides N."/>
            <person name="Anderson I."/>
            <person name="Wall J.D."/>
            <person name="Arkin A.P."/>
            <person name="Dehal P."/>
            <person name="Chivian D."/>
            <person name="Giles B."/>
            <person name="Hazen T.C."/>
        </authorList>
    </citation>
    <scope>NUCLEOTIDE SEQUENCE [LARGE SCALE GENOMIC DNA]</scope>
    <source>
        <strain>ATCC 14822 / DSM 2638 / NCIMB 8403 / VKM B-1763</strain>
    </source>
</reference>